<accession>Q976E1</accession>
<keyword id="KW-1185">Reference proteome</keyword>
<protein>
    <recommendedName>
        <fullName evidence="1">UPF0210 protein STK_02450</fullName>
    </recommendedName>
</protein>
<reference key="1">
    <citation type="journal article" date="2001" name="DNA Res.">
        <title>Complete genome sequence of an aerobic thermoacidophilic Crenarchaeon, Sulfolobus tokodaii strain7.</title>
        <authorList>
            <person name="Kawarabayasi Y."/>
            <person name="Hino Y."/>
            <person name="Horikawa H."/>
            <person name="Jin-no K."/>
            <person name="Takahashi M."/>
            <person name="Sekine M."/>
            <person name="Baba S."/>
            <person name="Ankai A."/>
            <person name="Kosugi H."/>
            <person name="Hosoyama A."/>
            <person name="Fukui S."/>
            <person name="Nagai Y."/>
            <person name="Nishijima K."/>
            <person name="Otsuka R."/>
            <person name="Nakazawa H."/>
            <person name="Takamiya M."/>
            <person name="Kato Y."/>
            <person name="Yoshizawa T."/>
            <person name="Tanaka T."/>
            <person name="Kudoh Y."/>
            <person name="Yamazaki J."/>
            <person name="Kushida N."/>
            <person name="Oguchi A."/>
            <person name="Aoki K."/>
            <person name="Masuda S."/>
            <person name="Yanagii M."/>
            <person name="Nishimura M."/>
            <person name="Yamagishi A."/>
            <person name="Oshima T."/>
            <person name="Kikuchi H."/>
        </authorList>
    </citation>
    <scope>NUCLEOTIDE SEQUENCE [LARGE SCALE GENOMIC DNA]</scope>
    <source>
        <strain>DSM 16993 / JCM 10545 / NBRC 100140 / 7</strain>
    </source>
</reference>
<evidence type="ECO:0000255" key="1">
    <source>
        <dbReference type="HAMAP-Rule" id="MF_01221"/>
    </source>
</evidence>
<proteinExistence type="inferred from homology"/>
<name>Y245_SULTO</name>
<dbReference type="EMBL" id="BA000023">
    <property type="protein sequence ID" value="BAB65206.1"/>
    <property type="molecule type" value="Genomic_DNA"/>
</dbReference>
<dbReference type="RefSeq" id="WP_010978189.1">
    <property type="nucleotide sequence ID" value="NC_003106.2"/>
</dbReference>
<dbReference type="SMR" id="Q976E1"/>
<dbReference type="STRING" id="273063.STK_02450"/>
<dbReference type="GeneID" id="1458136"/>
<dbReference type="KEGG" id="sto:STK_02450"/>
<dbReference type="PATRIC" id="fig|273063.9.peg.291"/>
<dbReference type="eggNOG" id="arCOG04321">
    <property type="taxonomic scope" value="Archaea"/>
</dbReference>
<dbReference type="OrthoDB" id="21376at2157"/>
<dbReference type="Proteomes" id="UP000001015">
    <property type="component" value="Chromosome"/>
</dbReference>
<dbReference type="CDD" id="cd08025">
    <property type="entry name" value="RNR_PFL_like_DUF711"/>
    <property type="match status" value="1"/>
</dbReference>
<dbReference type="Gene3D" id="3.20.70.20">
    <property type="match status" value="1"/>
</dbReference>
<dbReference type="HAMAP" id="MF_01221">
    <property type="entry name" value="UPF0210"/>
    <property type="match status" value="1"/>
</dbReference>
<dbReference type="InterPro" id="IPR007841">
    <property type="entry name" value="UPF0210"/>
</dbReference>
<dbReference type="NCBIfam" id="NF003700">
    <property type="entry name" value="PRK05313.1"/>
    <property type="match status" value="1"/>
</dbReference>
<dbReference type="PANTHER" id="PTHR37560:SF1">
    <property type="entry name" value="UPF0210 PROTEIN MJ1665"/>
    <property type="match status" value="1"/>
</dbReference>
<dbReference type="PANTHER" id="PTHR37560">
    <property type="entry name" value="UPF0210 PROTEIN SPR0218"/>
    <property type="match status" value="1"/>
</dbReference>
<dbReference type="Pfam" id="PF05167">
    <property type="entry name" value="DUF711"/>
    <property type="match status" value="1"/>
</dbReference>
<dbReference type="SUPFAM" id="SSF51998">
    <property type="entry name" value="PFL-like glycyl radical enzymes"/>
    <property type="match status" value="1"/>
</dbReference>
<feature type="chain" id="PRO_0000070568" description="UPF0210 protein STK_02450">
    <location>
        <begin position="1"/>
        <end position="445"/>
    </location>
</feature>
<organism>
    <name type="scientific">Sulfurisphaera tokodaii (strain DSM 16993 / JCM 10545 / NBRC 100140 / 7)</name>
    <name type="common">Sulfolobus tokodaii</name>
    <dbReference type="NCBI Taxonomy" id="273063"/>
    <lineage>
        <taxon>Archaea</taxon>
        <taxon>Thermoproteota</taxon>
        <taxon>Thermoprotei</taxon>
        <taxon>Sulfolobales</taxon>
        <taxon>Sulfolobaceae</taxon>
        <taxon>Sulfurisphaera</taxon>
    </lineage>
</organism>
<gene>
    <name type="ordered locus">STK_02450</name>
</gene>
<sequence>MKYSAEEIIEVYQMLNEEDLDIRSVTLSINTLFAISDDLDKSLKKLEEINNFLERFSKIVDEVGSKYGIRIVTKRVSVSPIQFFLEVLDEKDGIELAKYLDRIAERNNIDYISGYSAFADKGFTRGSLRVLKTLTDALNKTKRLAGMINAASTMSGMNIDAIKIFVDRIFEIPPESSSRTAIMSNVPPDSPFVPSAHHGMGMPEATINVAVSGPGVIKAAIERSKPKTLQELHDIIKRAAFKITRLGELVGRTVAENMGINFTTVDLSLAPSPKVGDSVAEIIETMGIEKIGGHGSLAALAILMDAVKKGGAMATSSVGGLSSAFIPVSEDAVMSERSLEGYIDFYTLIALSSVCNSGIDMVGVSKSQGKDKVIGLISDILALGISLNKILGARIIPIDSPPGSYIDLGGLLGKIVVMKLKDVNVSKFTSYRGFIPSTVKRLELG</sequence>
<comment type="similarity">
    <text evidence="1">Belongs to the UPF0210 family.</text>
</comment>